<protein>
    <recommendedName>
        <fullName evidence="1">Isocitrate dehydrogenase kinase/phosphatase</fullName>
        <shortName evidence="1">IDH kinase/phosphatase</shortName>
        <shortName evidence="1">IDHK/P</shortName>
        <ecNumber evidence="1">2.7.11.5</ecNumber>
        <ecNumber evidence="1">3.1.3.-</ecNumber>
    </recommendedName>
</protein>
<gene>
    <name evidence="1" type="primary">aceK</name>
    <name type="ordered locus">YE3879</name>
</gene>
<organism>
    <name type="scientific">Yersinia enterocolitica serotype O:8 / biotype 1B (strain NCTC 13174 / 8081)</name>
    <dbReference type="NCBI Taxonomy" id="393305"/>
    <lineage>
        <taxon>Bacteria</taxon>
        <taxon>Pseudomonadati</taxon>
        <taxon>Pseudomonadota</taxon>
        <taxon>Gammaproteobacteria</taxon>
        <taxon>Enterobacterales</taxon>
        <taxon>Yersiniaceae</taxon>
        <taxon>Yersinia</taxon>
    </lineage>
</organism>
<reference key="1">
    <citation type="journal article" date="2006" name="PLoS Genet.">
        <title>The complete genome sequence and comparative genome analysis of the high pathogenicity Yersinia enterocolitica strain 8081.</title>
        <authorList>
            <person name="Thomson N.R."/>
            <person name="Howard S."/>
            <person name="Wren B.W."/>
            <person name="Holden M.T.G."/>
            <person name="Crossman L."/>
            <person name="Challis G.L."/>
            <person name="Churcher C."/>
            <person name="Mungall K."/>
            <person name="Brooks K."/>
            <person name="Chillingworth T."/>
            <person name="Feltwell T."/>
            <person name="Abdellah Z."/>
            <person name="Hauser H."/>
            <person name="Jagels K."/>
            <person name="Maddison M."/>
            <person name="Moule S."/>
            <person name="Sanders M."/>
            <person name="Whitehead S."/>
            <person name="Quail M.A."/>
            <person name="Dougan G."/>
            <person name="Parkhill J."/>
            <person name="Prentice M.B."/>
        </authorList>
    </citation>
    <scope>NUCLEOTIDE SEQUENCE [LARGE SCALE GENOMIC DNA]</scope>
    <source>
        <strain>NCTC 13174 / 8081</strain>
    </source>
</reference>
<feature type="chain" id="PRO_0000288301" description="Isocitrate dehydrogenase kinase/phosphatase">
    <location>
        <begin position="1"/>
        <end position="575"/>
    </location>
</feature>
<feature type="active site" evidence="1">
    <location>
        <position position="371"/>
    </location>
</feature>
<feature type="binding site" evidence="1">
    <location>
        <begin position="315"/>
        <end position="321"/>
    </location>
    <ligand>
        <name>ATP</name>
        <dbReference type="ChEBI" id="CHEBI:30616"/>
    </ligand>
</feature>
<feature type="binding site" evidence="1">
    <location>
        <position position="336"/>
    </location>
    <ligand>
        <name>ATP</name>
        <dbReference type="ChEBI" id="CHEBI:30616"/>
    </ligand>
</feature>
<proteinExistence type="inferred from homology"/>
<keyword id="KW-0067">ATP-binding</keyword>
<keyword id="KW-0963">Cytoplasm</keyword>
<keyword id="KW-0329">Glyoxylate bypass</keyword>
<keyword id="KW-0378">Hydrolase</keyword>
<keyword id="KW-0418">Kinase</keyword>
<keyword id="KW-0547">Nucleotide-binding</keyword>
<keyword id="KW-0904">Protein phosphatase</keyword>
<keyword id="KW-0723">Serine/threonine-protein kinase</keyword>
<keyword id="KW-0808">Transferase</keyword>
<keyword id="KW-0816">Tricarboxylic acid cycle</keyword>
<comment type="function">
    <text evidence="1">Bifunctional enzyme which can phosphorylate or dephosphorylate isocitrate dehydrogenase (IDH) on a specific serine residue. This is a regulatory mechanism which enables bacteria to bypass the Krebs cycle via the glyoxylate shunt in response to the source of carbon. When bacteria are grown on glucose, IDH is fully active and unphosphorylated, but when grown on acetate or ethanol, the activity of IDH declines drastically concomitant with its phosphorylation.</text>
</comment>
<comment type="catalytic activity">
    <reaction evidence="1">
        <text>L-seryl-[isocitrate dehydrogenase] + ATP = O-phospho-L-seryl-[isocitrate dehydrogenase] + ADP + H(+)</text>
        <dbReference type="Rhea" id="RHEA:43540"/>
        <dbReference type="Rhea" id="RHEA-COMP:10605"/>
        <dbReference type="Rhea" id="RHEA-COMP:10606"/>
        <dbReference type="ChEBI" id="CHEBI:15378"/>
        <dbReference type="ChEBI" id="CHEBI:29999"/>
        <dbReference type="ChEBI" id="CHEBI:30616"/>
        <dbReference type="ChEBI" id="CHEBI:83421"/>
        <dbReference type="ChEBI" id="CHEBI:456216"/>
        <dbReference type="EC" id="2.7.11.5"/>
    </reaction>
</comment>
<comment type="subcellular location">
    <subcellularLocation>
        <location evidence="1">Cytoplasm</location>
    </subcellularLocation>
</comment>
<comment type="similarity">
    <text evidence="1">Belongs to the AceK family.</text>
</comment>
<accession>A1JRX0</accession>
<evidence type="ECO:0000255" key="1">
    <source>
        <dbReference type="HAMAP-Rule" id="MF_00747"/>
    </source>
</evidence>
<dbReference type="EC" id="2.7.11.5" evidence="1"/>
<dbReference type="EC" id="3.1.3.-" evidence="1"/>
<dbReference type="EMBL" id="AM286415">
    <property type="protein sequence ID" value="CAL13898.1"/>
    <property type="molecule type" value="Genomic_DNA"/>
</dbReference>
<dbReference type="RefSeq" id="WP_005174579.1">
    <property type="nucleotide sequence ID" value="NC_008800.1"/>
</dbReference>
<dbReference type="RefSeq" id="YP_001008024.1">
    <property type="nucleotide sequence ID" value="NC_008800.1"/>
</dbReference>
<dbReference type="SMR" id="A1JRX0"/>
<dbReference type="KEGG" id="yen:YE3879"/>
<dbReference type="PATRIC" id="fig|393305.7.peg.4127"/>
<dbReference type="eggNOG" id="COG4579">
    <property type="taxonomic scope" value="Bacteria"/>
</dbReference>
<dbReference type="HOGENOM" id="CLU_033804_1_1_6"/>
<dbReference type="OrthoDB" id="5287793at2"/>
<dbReference type="Proteomes" id="UP000000642">
    <property type="component" value="Chromosome"/>
</dbReference>
<dbReference type="GO" id="GO:0005737">
    <property type="term" value="C:cytoplasm"/>
    <property type="evidence" value="ECO:0007669"/>
    <property type="project" value="UniProtKB-SubCell"/>
</dbReference>
<dbReference type="GO" id="GO:0008772">
    <property type="term" value="F:[isocitrate dehydrogenase (NADP+)] kinase activity"/>
    <property type="evidence" value="ECO:0007669"/>
    <property type="project" value="UniProtKB-UniRule"/>
</dbReference>
<dbReference type="GO" id="GO:0016208">
    <property type="term" value="F:AMP binding"/>
    <property type="evidence" value="ECO:0007669"/>
    <property type="project" value="TreeGrafter"/>
</dbReference>
<dbReference type="GO" id="GO:0005524">
    <property type="term" value="F:ATP binding"/>
    <property type="evidence" value="ECO:0007669"/>
    <property type="project" value="UniProtKB-UniRule"/>
</dbReference>
<dbReference type="GO" id="GO:0004721">
    <property type="term" value="F:phosphoprotein phosphatase activity"/>
    <property type="evidence" value="ECO:0007669"/>
    <property type="project" value="UniProtKB-KW"/>
</dbReference>
<dbReference type="GO" id="GO:0004674">
    <property type="term" value="F:protein serine/threonine kinase activity"/>
    <property type="evidence" value="ECO:0007669"/>
    <property type="project" value="UniProtKB-KW"/>
</dbReference>
<dbReference type="GO" id="GO:0006006">
    <property type="term" value="P:glucose metabolic process"/>
    <property type="evidence" value="ECO:0007669"/>
    <property type="project" value="InterPro"/>
</dbReference>
<dbReference type="GO" id="GO:0006097">
    <property type="term" value="P:glyoxylate cycle"/>
    <property type="evidence" value="ECO:0007669"/>
    <property type="project" value="UniProtKB-UniRule"/>
</dbReference>
<dbReference type="GO" id="GO:0006099">
    <property type="term" value="P:tricarboxylic acid cycle"/>
    <property type="evidence" value="ECO:0007669"/>
    <property type="project" value="UniProtKB-UniRule"/>
</dbReference>
<dbReference type="HAMAP" id="MF_00747">
    <property type="entry name" value="AceK"/>
    <property type="match status" value="1"/>
</dbReference>
<dbReference type="InterPro" id="IPR046855">
    <property type="entry name" value="AceK_kinase"/>
</dbReference>
<dbReference type="InterPro" id="IPR046854">
    <property type="entry name" value="AceK_regulatory"/>
</dbReference>
<dbReference type="InterPro" id="IPR010452">
    <property type="entry name" value="Isocitrate_DH_AceK"/>
</dbReference>
<dbReference type="NCBIfam" id="NF002804">
    <property type="entry name" value="PRK02946.1"/>
    <property type="match status" value="1"/>
</dbReference>
<dbReference type="PANTHER" id="PTHR39559">
    <property type="match status" value="1"/>
</dbReference>
<dbReference type="PANTHER" id="PTHR39559:SF1">
    <property type="entry name" value="ISOCITRATE DEHYDROGENASE KINASE_PHOSPHATASE"/>
    <property type="match status" value="1"/>
</dbReference>
<dbReference type="Pfam" id="PF06315">
    <property type="entry name" value="AceK_kinase"/>
    <property type="match status" value="1"/>
</dbReference>
<dbReference type="Pfam" id="PF20423">
    <property type="entry name" value="AceK_regulatory"/>
    <property type="match status" value="1"/>
</dbReference>
<dbReference type="PIRSF" id="PIRSF000719">
    <property type="entry name" value="AceK"/>
    <property type="match status" value="1"/>
</dbReference>
<name>ACEK_YERE8</name>
<sequence length="575" mass="67387">MVTKLEQLIAQTILQGFDAQYGRFLEVTAGAQHRFEQADWHAVQQAMKKRIHLYDSHVGLVVEQLKHITDQRCFDVNFLTRVKEIYTGLLPDYPRFEIAESFFNSVYCRLFKHRDLTPDKLFVFSSQPERRFREIPRPLARDFAPKGDLSGMLQVVLNDLPLRLPWENLPRDIGYIATALRQNFTDEQLATARFQVANELFYRNKAAWLVGKLRLADEVYPFLLPIHHNESGGLFIDTCLTSKAEASIVFGFARSYFMVYAPLPAAMVEWLREILPGKSTAELYMAIGCQKHGKTESYREYLTFVHQSSEQFIIAPGVKGMVMLVFTLPSFDRVFKVIKDQFAPQKEVSQTRVLECYQLVKEHDRVGRMADTQEYENFVIDKHRISAELLTELQREVPEKLEDLGDQIIIKHLYMERRMTPLNLYIEQANDQQLKDAIEEYGNAIKQLAAANIFPGDMLFKNFGVTRHGRVVFYDYDEICYMTEVNFRDIPPPRYPEDEMASEPWYSVSPNDVFPEEFRHFLCTDLKVRHFFEEMHSDLFHASYWRGLQQRIKDGHVEDVFAYRRKQRFSQRVIS</sequence>